<keyword id="KW-0028">Amino-acid biosynthesis</keyword>
<keyword id="KW-0963">Cytoplasm</keyword>
<keyword id="KW-0413">Isomerase</keyword>
<keyword id="KW-0486">Methionine biosynthesis</keyword>
<keyword id="KW-0539">Nucleus</keyword>
<keyword id="KW-1185">Reference proteome</keyword>
<evidence type="ECO:0000255" key="1">
    <source>
        <dbReference type="HAMAP-Rule" id="MF_03119"/>
    </source>
</evidence>
<feature type="chain" id="PRO_0000402059" description="Methylthioribose-1-phosphate isomerase">
    <location>
        <begin position="1"/>
        <end position="372"/>
    </location>
</feature>
<feature type="active site" description="Proton donor" evidence="1">
    <location>
        <position position="252"/>
    </location>
</feature>
<feature type="site" description="Transition state stabilizer" evidence="1">
    <location>
        <position position="171"/>
    </location>
</feature>
<proteinExistence type="inferred from homology"/>
<reference key="1">
    <citation type="journal article" date="2004" name="Nature">
        <title>Genome evolution in yeasts.</title>
        <authorList>
            <person name="Dujon B."/>
            <person name="Sherman D."/>
            <person name="Fischer G."/>
            <person name="Durrens P."/>
            <person name="Casaregola S."/>
            <person name="Lafontaine I."/>
            <person name="de Montigny J."/>
            <person name="Marck C."/>
            <person name="Neuveglise C."/>
            <person name="Talla E."/>
            <person name="Goffard N."/>
            <person name="Frangeul L."/>
            <person name="Aigle M."/>
            <person name="Anthouard V."/>
            <person name="Babour A."/>
            <person name="Barbe V."/>
            <person name="Barnay S."/>
            <person name="Blanchin S."/>
            <person name="Beckerich J.-M."/>
            <person name="Beyne E."/>
            <person name="Bleykasten C."/>
            <person name="Boisrame A."/>
            <person name="Boyer J."/>
            <person name="Cattolico L."/>
            <person name="Confanioleri F."/>
            <person name="de Daruvar A."/>
            <person name="Despons L."/>
            <person name="Fabre E."/>
            <person name="Fairhead C."/>
            <person name="Ferry-Dumazet H."/>
            <person name="Groppi A."/>
            <person name="Hantraye F."/>
            <person name="Hennequin C."/>
            <person name="Jauniaux N."/>
            <person name="Joyet P."/>
            <person name="Kachouri R."/>
            <person name="Kerrest A."/>
            <person name="Koszul R."/>
            <person name="Lemaire M."/>
            <person name="Lesur I."/>
            <person name="Ma L."/>
            <person name="Muller H."/>
            <person name="Nicaud J.-M."/>
            <person name="Nikolski M."/>
            <person name="Oztas S."/>
            <person name="Ozier-Kalogeropoulos O."/>
            <person name="Pellenz S."/>
            <person name="Potier S."/>
            <person name="Richard G.-F."/>
            <person name="Straub M.-L."/>
            <person name="Suleau A."/>
            <person name="Swennen D."/>
            <person name="Tekaia F."/>
            <person name="Wesolowski-Louvel M."/>
            <person name="Westhof E."/>
            <person name="Wirth B."/>
            <person name="Zeniou-Meyer M."/>
            <person name="Zivanovic Y."/>
            <person name="Bolotin-Fukuhara M."/>
            <person name="Thierry A."/>
            <person name="Bouchier C."/>
            <person name="Caudron B."/>
            <person name="Scarpelli C."/>
            <person name="Gaillardin C."/>
            <person name="Weissenbach J."/>
            <person name="Wincker P."/>
            <person name="Souciet J.-L."/>
        </authorList>
    </citation>
    <scope>NUCLEOTIDE SEQUENCE [LARGE SCALE GENOMIC DNA]</scope>
    <source>
        <strain>CLIB 122 / E 150</strain>
    </source>
</reference>
<gene>
    <name evidence="1" type="primary">MRI1</name>
    <name type="ordered locus">YALI0A16698g</name>
</gene>
<comment type="function">
    <text evidence="1">Catalyzes the interconversion of methylthioribose-1-phosphate (MTR-1-P) into methylthioribulose-1-phosphate (MTRu-1-P).</text>
</comment>
<comment type="catalytic activity">
    <reaction evidence="1">
        <text>5-(methylsulfanyl)-alpha-D-ribose 1-phosphate = 5-(methylsulfanyl)-D-ribulose 1-phosphate</text>
        <dbReference type="Rhea" id="RHEA:19989"/>
        <dbReference type="ChEBI" id="CHEBI:58533"/>
        <dbReference type="ChEBI" id="CHEBI:58548"/>
        <dbReference type="EC" id="5.3.1.23"/>
    </reaction>
</comment>
<comment type="pathway">
    <text evidence="1">Amino-acid biosynthesis; L-methionine biosynthesis via salvage pathway; L-methionine from S-methyl-5-thio-alpha-D-ribose 1-phosphate: step 1/6.</text>
</comment>
<comment type="subcellular location">
    <subcellularLocation>
        <location evidence="1">Cytoplasm</location>
    </subcellularLocation>
    <subcellularLocation>
        <location evidence="1">Nucleus</location>
    </subcellularLocation>
</comment>
<comment type="similarity">
    <text evidence="1">Belongs to the eIF-2B alpha/beta/delta subunits family. MtnA subfamily.</text>
</comment>
<sequence length="372" mass="40234">MSLEAIRYDEKNHTLTILDQLRLPHESEYVPINNSDDGWKAIKDMVVRGAPAIAIVAILSLAVELVHGGKVSRDQTRAEVGSFISDRLDYLNTSRPTAVNLSDAVGSFKKLVQTQTGSASELIEAFLSASHKMLLDDVQDNKNIGKYGLEWIQKNVPQAANGHKISALTICNTGSLATAGYGTALGIIRALHEAGVLERVYALETRPYNQGSRLTAYELVHDGIPATLVTDSMAAALLRKNKDIGVIIVGADRVVLNGDTANKIGTFQLSILANHFDRKFIVAAPTTSIDVQTKSGEDIEIEERPAIELTQVKGVDANKQPLTVSVAAPGIEVWNPAFDYAPYKLIDAIVTEKGVAEKTGGEFNLKEFKSAN</sequence>
<accession>Q6CGS4</accession>
<dbReference type="EC" id="5.3.1.23" evidence="1"/>
<dbReference type="EMBL" id="CR382127">
    <property type="protein sequence ID" value="CAG84070.1"/>
    <property type="molecule type" value="Genomic_DNA"/>
</dbReference>
<dbReference type="RefSeq" id="XP_500138.1">
    <property type="nucleotide sequence ID" value="XM_500138.1"/>
</dbReference>
<dbReference type="SMR" id="Q6CGS4"/>
<dbReference type="FunCoup" id="Q6CGS4">
    <property type="interactions" value="749"/>
</dbReference>
<dbReference type="STRING" id="284591.Q6CGS4"/>
<dbReference type="EnsemblFungi" id="CAG84070">
    <property type="protein sequence ID" value="CAG84070"/>
    <property type="gene ID" value="YALI0_A16698g"/>
</dbReference>
<dbReference type="KEGG" id="yli:2906518"/>
<dbReference type="VEuPathDB" id="FungiDB:YALI0_A16698g"/>
<dbReference type="HOGENOM" id="CLU_016218_1_3_1"/>
<dbReference type="InParanoid" id="Q6CGS4"/>
<dbReference type="OMA" id="CETRPLN"/>
<dbReference type="OrthoDB" id="88798at4891"/>
<dbReference type="UniPathway" id="UPA00904">
    <property type="reaction ID" value="UER00874"/>
</dbReference>
<dbReference type="Proteomes" id="UP000001300">
    <property type="component" value="Chromosome A"/>
</dbReference>
<dbReference type="GO" id="GO:0005737">
    <property type="term" value="C:cytoplasm"/>
    <property type="evidence" value="ECO:0007669"/>
    <property type="project" value="UniProtKB-SubCell"/>
</dbReference>
<dbReference type="GO" id="GO:0005634">
    <property type="term" value="C:nucleus"/>
    <property type="evidence" value="ECO:0007669"/>
    <property type="project" value="UniProtKB-SubCell"/>
</dbReference>
<dbReference type="GO" id="GO:0046523">
    <property type="term" value="F:S-methyl-5-thioribose-1-phosphate isomerase activity"/>
    <property type="evidence" value="ECO:0000318"/>
    <property type="project" value="GO_Central"/>
</dbReference>
<dbReference type="GO" id="GO:0019509">
    <property type="term" value="P:L-methionine salvage from methylthioadenosine"/>
    <property type="evidence" value="ECO:0000318"/>
    <property type="project" value="GO_Central"/>
</dbReference>
<dbReference type="FunFam" id="1.20.120.420:FF:000006">
    <property type="entry name" value="Methylthioribose-1-phosphate isomerase"/>
    <property type="match status" value="1"/>
</dbReference>
<dbReference type="FunFam" id="3.40.50.10470:FF:000003">
    <property type="entry name" value="Methylthioribose-1-phosphate isomerase"/>
    <property type="match status" value="1"/>
</dbReference>
<dbReference type="Gene3D" id="1.20.120.420">
    <property type="entry name" value="translation initiation factor eif-2b, domain 1"/>
    <property type="match status" value="1"/>
</dbReference>
<dbReference type="Gene3D" id="3.40.50.10470">
    <property type="entry name" value="Translation initiation factor eif-2b, domain 2"/>
    <property type="match status" value="1"/>
</dbReference>
<dbReference type="HAMAP" id="MF_01678">
    <property type="entry name" value="Salvage_MtnA"/>
    <property type="match status" value="1"/>
</dbReference>
<dbReference type="InterPro" id="IPR000649">
    <property type="entry name" value="IF-2B-related"/>
</dbReference>
<dbReference type="InterPro" id="IPR005251">
    <property type="entry name" value="IF-M1Pi"/>
</dbReference>
<dbReference type="InterPro" id="IPR042529">
    <property type="entry name" value="IF_2B-like_C"/>
</dbReference>
<dbReference type="InterPro" id="IPR011559">
    <property type="entry name" value="Initiation_fac_2B_a/b/d"/>
</dbReference>
<dbReference type="InterPro" id="IPR027363">
    <property type="entry name" value="M1Pi_N"/>
</dbReference>
<dbReference type="InterPro" id="IPR037171">
    <property type="entry name" value="NagB/RpiA_transferase-like"/>
</dbReference>
<dbReference type="NCBIfam" id="TIGR00524">
    <property type="entry name" value="eIF-2B_rel"/>
    <property type="match status" value="1"/>
</dbReference>
<dbReference type="NCBIfam" id="NF004326">
    <property type="entry name" value="PRK05720.1"/>
    <property type="match status" value="1"/>
</dbReference>
<dbReference type="NCBIfam" id="TIGR00512">
    <property type="entry name" value="salvage_mtnA"/>
    <property type="match status" value="1"/>
</dbReference>
<dbReference type="PANTHER" id="PTHR43475">
    <property type="entry name" value="METHYLTHIORIBOSE-1-PHOSPHATE ISOMERASE"/>
    <property type="match status" value="1"/>
</dbReference>
<dbReference type="PANTHER" id="PTHR43475:SF1">
    <property type="entry name" value="METHYLTHIORIBOSE-1-PHOSPHATE ISOMERASE"/>
    <property type="match status" value="1"/>
</dbReference>
<dbReference type="Pfam" id="PF01008">
    <property type="entry name" value="IF-2B"/>
    <property type="match status" value="1"/>
</dbReference>
<dbReference type="SUPFAM" id="SSF100950">
    <property type="entry name" value="NagB/RpiA/CoA transferase-like"/>
    <property type="match status" value="1"/>
</dbReference>
<protein>
    <recommendedName>
        <fullName evidence="1">Methylthioribose-1-phosphate isomerase</fullName>
        <shortName evidence="1">M1Pi</shortName>
        <shortName evidence="1">MTR-1-P isomerase</shortName>
        <ecNumber evidence="1">5.3.1.23</ecNumber>
    </recommendedName>
    <alternativeName>
        <fullName evidence="1">S-methyl-5-thioribose-1-phosphate isomerase</fullName>
    </alternativeName>
    <alternativeName>
        <fullName evidence="1">Translation initiation factor eIF-2B subunit alpha/beta/delta-like protein</fullName>
    </alternativeName>
</protein>
<organism>
    <name type="scientific">Yarrowia lipolytica (strain CLIB 122 / E 150)</name>
    <name type="common">Yeast</name>
    <name type="synonym">Candida lipolytica</name>
    <dbReference type="NCBI Taxonomy" id="284591"/>
    <lineage>
        <taxon>Eukaryota</taxon>
        <taxon>Fungi</taxon>
        <taxon>Dikarya</taxon>
        <taxon>Ascomycota</taxon>
        <taxon>Saccharomycotina</taxon>
        <taxon>Dipodascomycetes</taxon>
        <taxon>Dipodascales</taxon>
        <taxon>Dipodascales incertae sedis</taxon>
        <taxon>Yarrowia</taxon>
    </lineage>
</organism>
<name>MTNA_YARLI</name>